<name>PPP5_TRYB2</name>
<dbReference type="EC" id="3.1.3.16" evidence="9"/>
<dbReference type="EMBL" id="CM000208">
    <property type="protein sequence ID" value="EAN78738.1"/>
    <property type="molecule type" value="Genomic_DNA"/>
</dbReference>
<dbReference type="RefSeq" id="XP_827850.1">
    <property type="nucleotide sequence ID" value="XM_822757.1"/>
</dbReference>
<dbReference type="FunCoup" id="Q388N2">
    <property type="interactions" value="626"/>
</dbReference>
<dbReference type="STRING" id="185431.Q388N2"/>
<dbReference type="PaxDb" id="5691-EAN78738"/>
<dbReference type="GeneID" id="3662024"/>
<dbReference type="KEGG" id="tbr:Tb10.05.0110"/>
<dbReference type="VEuPathDB" id="TriTrypDB:Tb927.10.13670"/>
<dbReference type="eggNOG" id="KOG0376">
    <property type="taxonomic scope" value="Eukaryota"/>
</dbReference>
<dbReference type="InParanoid" id="Q388N2"/>
<dbReference type="OMA" id="IHKKYAF"/>
<dbReference type="OrthoDB" id="445564at2759"/>
<dbReference type="Proteomes" id="UP000008524">
    <property type="component" value="Chromosome 10"/>
</dbReference>
<dbReference type="GO" id="GO:0005737">
    <property type="term" value="C:cytoplasm"/>
    <property type="evidence" value="ECO:0000314"/>
    <property type="project" value="GeneDB"/>
</dbReference>
<dbReference type="GO" id="GO:0005829">
    <property type="term" value="C:cytosol"/>
    <property type="evidence" value="ECO:0000314"/>
    <property type="project" value="UniProtKB"/>
</dbReference>
<dbReference type="GO" id="GO:0005634">
    <property type="term" value="C:nucleus"/>
    <property type="evidence" value="ECO:0000314"/>
    <property type="project" value="UniProtKB"/>
</dbReference>
<dbReference type="GO" id="GO:0046872">
    <property type="term" value="F:metal ion binding"/>
    <property type="evidence" value="ECO:0007669"/>
    <property type="project" value="UniProtKB-KW"/>
</dbReference>
<dbReference type="GO" id="GO:0016791">
    <property type="term" value="F:phosphatase activity"/>
    <property type="evidence" value="ECO:0000314"/>
    <property type="project" value="UniProtKB"/>
</dbReference>
<dbReference type="GO" id="GO:0004722">
    <property type="term" value="F:protein serine/threonine phosphatase activity"/>
    <property type="evidence" value="ECO:0000318"/>
    <property type="project" value="GO_Central"/>
</dbReference>
<dbReference type="CDD" id="cd07417">
    <property type="entry name" value="MPP_PP5_C"/>
    <property type="match status" value="1"/>
</dbReference>
<dbReference type="FunFam" id="3.60.21.10:FF:000036">
    <property type="entry name" value="Serine/threonine protein phosphatase 5"/>
    <property type="match status" value="1"/>
</dbReference>
<dbReference type="Gene3D" id="3.60.21.10">
    <property type="match status" value="1"/>
</dbReference>
<dbReference type="Gene3D" id="1.25.40.10">
    <property type="entry name" value="Tetratricopeptide repeat domain"/>
    <property type="match status" value="1"/>
</dbReference>
<dbReference type="InterPro" id="IPR004843">
    <property type="entry name" value="Calcineurin-like_PHP_ApaH"/>
</dbReference>
<dbReference type="InterPro" id="IPR029052">
    <property type="entry name" value="Metallo-depent_PP-like"/>
</dbReference>
<dbReference type="InterPro" id="IPR041753">
    <property type="entry name" value="PP5_C"/>
</dbReference>
<dbReference type="InterPro" id="IPR013235">
    <property type="entry name" value="PPP_dom"/>
</dbReference>
<dbReference type="InterPro" id="IPR051134">
    <property type="entry name" value="PPP_phosphatase"/>
</dbReference>
<dbReference type="InterPro" id="IPR006186">
    <property type="entry name" value="Ser/Thr-sp_prot-phosphatase"/>
</dbReference>
<dbReference type="InterPro" id="IPR011990">
    <property type="entry name" value="TPR-like_helical_dom_sf"/>
</dbReference>
<dbReference type="InterPro" id="IPR019734">
    <property type="entry name" value="TPR_rpt"/>
</dbReference>
<dbReference type="PANTHER" id="PTHR45668">
    <property type="entry name" value="SERINE/THREONINE-PROTEIN PHOSPHATASE 5-RELATED"/>
    <property type="match status" value="1"/>
</dbReference>
<dbReference type="PANTHER" id="PTHR45668:SF5">
    <property type="entry name" value="SERINE_THREONINE-PROTEIN PHOSPHATASE 5"/>
    <property type="match status" value="1"/>
</dbReference>
<dbReference type="Pfam" id="PF00149">
    <property type="entry name" value="Metallophos"/>
    <property type="match status" value="1"/>
</dbReference>
<dbReference type="Pfam" id="PF08321">
    <property type="entry name" value="PPP5"/>
    <property type="match status" value="1"/>
</dbReference>
<dbReference type="Pfam" id="PF00515">
    <property type="entry name" value="TPR_1"/>
    <property type="match status" value="1"/>
</dbReference>
<dbReference type="PIRSF" id="PIRSF033096">
    <property type="entry name" value="PPPtase_5"/>
    <property type="match status" value="1"/>
</dbReference>
<dbReference type="PRINTS" id="PR00114">
    <property type="entry name" value="STPHPHTASE"/>
</dbReference>
<dbReference type="SMART" id="SM00156">
    <property type="entry name" value="PP2Ac"/>
    <property type="match status" value="1"/>
</dbReference>
<dbReference type="SMART" id="SM00028">
    <property type="entry name" value="TPR"/>
    <property type="match status" value="3"/>
</dbReference>
<dbReference type="SUPFAM" id="SSF56300">
    <property type="entry name" value="Metallo-dependent phosphatases"/>
    <property type="match status" value="1"/>
</dbReference>
<dbReference type="SUPFAM" id="SSF48452">
    <property type="entry name" value="TPR-like"/>
    <property type="match status" value="1"/>
</dbReference>
<dbReference type="PROSITE" id="PS50005">
    <property type="entry name" value="TPR"/>
    <property type="match status" value="2"/>
</dbReference>
<dbReference type="PROSITE" id="PS50293">
    <property type="entry name" value="TPR_REGION"/>
    <property type="match status" value="1"/>
</dbReference>
<sequence length="472" mass="53313">MAGVEEADKLKQLGNAAFSERKWHLAIDMYTKAIELTKTPTLFCNRALAELRAELPGAALADADAALGIEPTFAKAYYHKASAYLSLGKHKQALTNYKKVVDLAPQNSDAQAKVEFCKKEIRRINFENAIMTPDEAPLSQTIKLGSVRADYDGPRIENETVTVEFVEAMKEHFRLEKLIDRHDVIFILLEVQKILKKCPNFVSINVPVGEEITVCGDTHGQYYDLLNIFKLNGNPLETNRYLFNGDFVDRGSYSFENIMTLFAYKVLYPDHFFLSRGNHEGVSMNRMYGFEGEVTQKYNSEMFRLFTEVFNSLPIGHIINNEVFVVHGGLYSSDKVTLDDLQHPNRFRDIPESGLICESLWSDPQPMPGRAPSKRGVSCLSFGPDVTETFLNNNNLKLLVRSHEVKDEGYEIEHGGKCITVFSAPNYCDQMGNKGAFIRFTGGDMKPRFTTFTHVPHPGKRPMHYATGFGLF</sequence>
<comment type="function">
    <text evidence="2">May function as a protein phosphatase.</text>
</comment>
<comment type="catalytic activity">
    <reaction evidence="9">
        <text>O-phospho-L-seryl-[protein] + H2O = L-seryl-[protein] + phosphate</text>
        <dbReference type="Rhea" id="RHEA:20629"/>
        <dbReference type="Rhea" id="RHEA-COMP:9863"/>
        <dbReference type="Rhea" id="RHEA-COMP:11604"/>
        <dbReference type="ChEBI" id="CHEBI:15377"/>
        <dbReference type="ChEBI" id="CHEBI:29999"/>
        <dbReference type="ChEBI" id="CHEBI:43474"/>
        <dbReference type="ChEBI" id="CHEBI:83421"/>
        <dbReference type="EC" id="3.1.3.16"/>
    </reaction>
    <physiologicalReaction direction="left-to-right" evidence="9">
        <dbReference type="Rhea" id="RHEA:20630"/>
    </physiologicalReaction>
</comment>
<comment type="catalytic activity">
    <reaction evidence="9">
        <text>O-phospho-L-threonyl-[protein] + H2O = L-threonyl-[protein] + phosphate</text>
        <dbReference type="Rhea" id="RHEA:47004"/>
        <dbReference type="Rhea" id="RHEA-COMP:11060"/>
        <dbReference type="Rhea" id="RHEA-COMP:11605"/>
        <dbReference type="ChEBI" id="CHEBI:15377"/>
        <dbReference type="ChEBI" id="CHEBI:30013"/>
        <dbReference type="ChEBI" id="CHEBI:43474"/>
        <dbReference type="ChEBI" id="CHEBI:61977"/>
        <dbReference type="EC" id="3.1.3.16"/>
    </reaction>
    <physiologicalReaction direction="left-to-right" evidence="9">
        <dbReference type="Rhea" id="RHEA:47005"/>
    </physiologicalReaction>
</comment>
<comment type="cofactor">
    <cofactor evidence="1">
        <name>Mg(2+)</name>
        <dbReference type="ChEBI" id="CHEBI:18420"/>
    </cofactor>
    <cofactor evidence="1">
        <name>Mn(2+)</name>
        <dbReference type="ChEBI" id="CHEBI:29035"/>
    </cofactor>
    <text evidence="1">Binds 2 Mg(2+) or Mn(2+) cations per subunit.</text>
</comment>
<comment type="activity regulation">
    <text evidence="6">Activated by arachidonic acid.</text>
</comment>
<comment type="biophysicochemical properties">
    <kinetics>
        <KM evidence="6">200 mM for p-nitrophenylphosphate (at 30 degrees Celsius and at pH 7.4)</KM>
    </kinetics>
</comment>
<comment type="subcellular location">
    <subcellularLocation>
        <location evidence="6">Cytoplasm</location>
        <location evidence="6">Cytosol</location>
    </subcellularLocation>
    <subcellularLocation>
        <location evidence="6">Nucleus</location>
    </subcellularLocation>
    <text evidence="6">Predominantly present in the cytosol and localizes densely to the area near the nucleus (PubMed:11290414). Also present in the nucleus of some cells (PubMed:11290414).</text>
</comment>
<comment type="domain">
    <text evidence="2">The TPR repeats mediate protein-protein interactions with substrate proteins, but also autoinhibit PPT1 phosphatase activity.</text>
</comment>
<comment type="similarity">
    <text evidence="8">Belongs to the PPP phosphatase family. PP-5 (PP-T) subfamily.</text>
</comment>
<keyword id="KW-0963">Cytoplasm</keyword>
<keyword id="KW-0378">Hydrolase</keyword>
<keyword id="KW-0464">Manganese</keyword>
<keyword id="KW-0479">Metal-binding</keyword>
<keyword id="KW-0539">Nucleus</keyword>
<keyword id="KW-0904">Protein phosphatase</keyword>
<keyword id="KW-1185">Reference proteome</keyword>
<keyword id="KW-0677">Repeat</keyword>
<keyword id="KW-0802">TPR repeat</keyword>
<reference evidence="11" key="1">
    <citation type="journal article" date="2005" name="Science">
        <title>The genome of the African trypanosome Trypanosoma brucei.</title>
        <authorList>
            <person name="Berriman M."/>
            <person name="Ghedin E."/>
            <person name="Hertz-Fowler C."/>
            <person name="Blandin G."/>
            <person name="Renauld H."/>
            <person name="Bartholomeu D.C."/>
            <person name="Lennard N.J."/>
            <person name="Caler E."/>
            <person name="Hamlin N.E."/>
            <person name="Haas B."/>
            <person name="Bohme U."/>
            <person name="Hannick L."/>
            <person name="Aslett M.A."/>
            <person name="Shallom J."/>
            <person name="Marcello L."/>
            <person name="Hou L."/>
            <person name="Wickstead B."/>
            <person name="Alsmark U.C.M."/>
            <person name="Arrowsmith C."/>
            <person name="Atkin R.J."/>
            <person name="Barron A.J."/>
            <person name="Bringaud F."/>
            <person name="Brooks K."/>
            <person name="Carrington M."/>
            <person name="Cherevach I."/>
            <person name="Chillingworth T.J."/>
            <person name="Churcher C."/>
            <person name="Clark L.N."/>
            <person name="Corton C.H."/>
            <person name="Cronin A."/>
            <person name="Davies R.M."/>
            <person name="Doggett J."/>
            <person name="Djikeng A."/>
            <person name="Feldblyum T."/>
            <person name="Field M.C."/>
            <person name="Fraser A."/>
            <person name="Goodhead I."/>
            <person name="Hance Z."/>
            <person name="Harper D."/>
            <person name="Harris B.R."/>
            <person name="Hauser H."/>
            <person name="Hostetler J."/>
            <person name="Ivens A."/>
            <person name="Jagels K."/>
            <person name="Johnson D."/>
            <person name="Johnson J."/>
            <person name="Jones K."/>
            <person name="Kerhornou A.X."/>
            <person name="Koo H."/>
            <person name="Larke N."/>
            <person name="Landfear S."/>
            <person name="Larkin C."/>
            <person name="Leech V."/>
            <person name="Line A."/>
            <person name="Lord A."/>
            <person name="Macleod A."/>
            <person name="Mooney P.J."/>
            <person name="Moule S."/>
            <person name="Martin D.M."/>
            <person name="Morgan G.W."/>
            <person name="Mungall K."/>
            <person name="Norbertczak H."/>
            <person name="Ormond D."/>
            <person name="Pai G."/>
            <person name="Peacock C.S."/>
            <person name="Peterson J."/>
            <person name="Quail M.A."/>
            <person name="Rabbinowitsch E."/>
            <person name="Rajandream M.A."/>
            <person name="Reitter C."/>
            <person name="Salzberg S.L."/>
            <person name="Sanders M."/>
            <person name="Schobel S."/>
            <person name="Sharp S."/>
            <person name="Simmonds M."/>
            <person name="Simpson A.J."/>
            <person name="Tallon L."/>
            <person name="Turner C.M."/>
            <person name="Tait A."/>
            <person name="Tivey A.R."/>
            <person name="Van Aken S."/>
            <person name="Walker D."/>
            <person name="Wanless D."/>
            <person name="Wang S."/>
            <person name="White B."/>
            <person name="White O."/>
            <person name="Whitehead S."/>
            <person name="Woodward J."/>
            <person name="Wortman J."/>
            <person name="Adams M.D."/>
            <person name="Embley T.M."/>
            <person name="Gull K."/>
            <person name="Ullu E."/>
            <person name="Barry J.D."/>
            <person name="Fairlamb A.H."/>
            <person name="Opperdoes F."/>
            <person name="Barrell B.G."/>
            <person name="Donelson J.E."/>
            <person name="Hall N."/>
            <person name="Fraser C.M."/>
            <person name="Melville S.E."/>
            <person name="El-Sayed N.M.A."/>
        </authorList>
    </citation>
    <scope>NUCLEOTIDE SEQUENCE [LARGE SCALE GENOMIC DNA]</scope>
    <source>
        <strain evidence="11">927/4 GUTat10.1</strain>
    </source>
</reference>
<reference evidence="8" key="2">
    <citation type="journal article" date="2001" name="Gene">
        <title>Cloning and characterization of a novel serine/threonine protein phosphatase type 5 from Trypanosoma brucei.</title>
        <authorList>
            <person name="Chaudhuri M."/>
        </authorList>
    </citation>
    <scope>CATALYTIC ACTIVITY</scope>
    <scope>ACTIVITY REGULATION</scope>
    <scope>BIOPHYSICOCHEMICAL PROPERTIES</scope>
    <scope>SUBCELLULAR LOCATION</scope>
    <source>
        <strain evidence="7">LUMP 1026</strain>
    </source>
</reference>
<protein>
    <recommendedName>
        <fullName evidence="8">Serine/threonine-protein phosphatase T</fullName>
        <shortName evidence="8">PPT</shortName>
        <ecNumber evidence="9">3.1.3.16</ecNumber>
    </recommendedName>
    <alternativeName>
        <fullName evidence="7">TbPP5</fullName>
    </alternativeName>
</protein>
<feature type="chain" id="PRO_0000461642" description="Serine/threonine-protein phosphatase T">
    <location>
        <begin position="1"/>
        <end position="472"/>
    </location>
</feature>
<feature type="repeat" description="TPR 1" evidence="3 5">
    <location>
        <begin position="7"/>
        <end position="40"/>
    </location>
</feature>
<feature type="repeat" description="TPR 2" evidence="3">
    <location>
        <begin position="41"/>
        <end position="73"/>
    </location>
</feature>
<feature type="repeat" description="TPR 3" evidence="5">
    <location>
        <begin position="74"/>
        <end position="107"/>
    </location>
</feature>
<feature type="active site" description="Proton donor/acceptor" evidence="3 4">
    <location>
        <position position="279"/>
    </location>
</feature>
<feature type="binding site" evidence="1">
    <location>
        <position position="217"/>
    </location>
    <ligand>
        <name>Mn(2+)</name>
        <dbReference type="ChEBI" id="CHEBI:29035"/>
        <label>1</label>
    </ligand>
</feature>
<feature type="binding site" evidence="1">
    <location>
        <position position="219"/>
    </location>
    <ligand>
        <name>Mn(2+)</name>
        <dbReference type="ChEBI" id="CHEBI:29035"/>
        <label>1</label>
    </ligand>
</feature>
<feature type="binding site" evidence="1">
    <location>
        <position position="246"/>
    </location>
    <ligand>
        <name>Mn(2+)</name>
        <dbReference type="ChEBI" id="CHEBI:29035"/>
        <label>1</label>
    </ligand>
</feature>
<feature type="binding site" evidence="1">
    <location>
        <position position="246"/>
    </location>
    <ligand>
        <name>Mn(2+)</name>
        <dbReference type="ChEBI" id="CHEBI:29035"/>
        <label>2</label>
    </ligand>
</feature>
<feature type="binding site" evidence="1">
    <location>
        <position position="278"/>
    </location>
    <ligand>
        <name>Mn(2+)</name>
        <dbReference type="ChEBI" id="CHEBI:29035"/>
        <label>2</label>
    </ligand>
</feature>
<feature type="binding site" evidence="1">
    <location>
        <position position="327"/>
    </location>
    <ligand>
        <name>Mn(2+)</name>
        <dbReference type="ChEBI" id="CHEBI:29035"/>
        <label>2</label>
    </ligand>
</feature>
<feature type="binding site" evidence="1">
    <location>
        <position position="403"/>
    </location>
    <ligand>
        <name>Mn(2+)</name>
        <dbReference type="ChEBI" id="CHEBI:29035"/>
        <label>2</label>
    </ligand>
</feature>
<organism evidence="11">
    <name type="scientific">Trypanosoma brucei brucei (strain 927/4 GUTat10.1)</name>
    <dbReference type="NCBI Taxonomy" id="185431"/>
    <lineage>
        <taxon>Eukaryota</taxon>
        <taxon>Discoba</taxon>
        <taxon>Euglenozoa</taxon>
        <taxon>Kinetoplastea</taxon>
        <taxon>Metakinetoplastina</taxon>
        <taxon>Trypanosomatida</taxon>
        <taxon>Trypanosomatidae</taxon>
        <taxon>Trypanosoma</taxon>
    </lineage>
</organism>
<evidence type="ECO:0000250" key="1">
    <source>
        <dbReference type="UniProtKB" id="P53041"/>
    </source>
</evidence>
<evidence type="ECO:0000250" key="2">
    <source>
        <dbReference type="UniProtKB" id="P53043"/>
    </source>
</evidence>
<evidence type="ECO:0000255" key="3"/>
<evidence type="ECO:0000255" key="4">
    <source>
        <dbReference type="PIRSR" id="PIRSR033096-1"/>
    </source>
</evidence>
<evidence type="ECO:0000255" key="5">
    <source>
        <dbReference type="PROSITE-ProRule" id="PRU00339"/>
    </source>
</evidence>
<evidence type="ECO:0000269" key="6">
    <source>
    </source>
</evidence>
<evidence type="ECO:0000303" key="7">
    <source>
    </source>
</evidence>
<evidence type="ECO:0000305" key="8"/>
<evidence type="ECO:0000305" key="9">
    <source>
    </source>
</evidence>
<evidence type="ECO:0000312" key="10">
    <source>
        <dbReference type="EMBL" id="EAN78738.1"/>
    </source>
</evidence>
<evidence type="ECO:0000312" key="11">
    <source>
        <dbReference type="Proteomes" id="UP000008524"/>
    </source>
</evidence>
<accession>Q388N2</accession>
<proteinExistence type="evidence at protein level"/>
<gene>
    <name evidence="8" type="primary">PPT1</name>
    <name evidence="10" type="ORF">Tb10.05.0110</name>
</gene>